<comment type="function">
    <text evidence="1">Catalyzes the conversion of dethiobiotin (DTB) to biotin by the insertion of a sulfur atom into dethiobiotin via a radical-based mechanism.</text>
</comment>
<comment type="catalytic activity">
    <reaction evidence="1">
        <text>(4R,5S)-dethiobiotin + (sulfur carrier)-SH + 2 reduced [2Fe-2S]-[ferredoxin] + 2 S-adenosyl-L-methionine = (sulfur carrier)-H + biotin + 2 5'-deoxyadenosine + 2 L-methionine + 2 oxidized [2Fe-2S]-[ferredoxin]</text>
        <dbReference type="Rhea" id="RHEA:22060"/>
        <dbReference type="Rhea" id="RHEA-COMP:10000"/>
        <dbReference type="Rhea" id="RHEA-COMP:10001"/>
        <dbReference type="Rhea" id="RHEA-COMP:14737"/>
        <dbReference type="Rhea" id="RHEA-COMP:14739"/>
        <dbReference type="ChEBI" id="CHEBI:17319"/>
        <dbReference type="ChEBI" id="CHEBI:29917"/>
        <dbReference type="ChEBI" id="CHEBI:33737"/>
        <dbReference type="ChEBI" id="CHEBI:33738"/>
        <dbReference type="ChEBI" id="CHEBI:57586"/>
        <dbReference type="ChEBI" id="CHEBI:57844"/>
        <dbReference type="ChEBI" id="CHEBI:59789"/>
        <dbReference type="ChEBI" id="CHEBI:64428"/>
        <dbReference type="ChEBI" id="CHEBI:149473"/>
        <dbReference type="EC" id="2.8.1.6"/>
    </reaction>
</comment>
<comment type="cofactor">
    <cofactor evidence="1">
        <name>[4Fe-4S] cluster</name>
        <dbReference type="ChEBI" id="CHEBI:49883"/>
    </cofactor>
    <text evidence="1">Binds 1 [4Fe-4S] cluster. The cluster is coordinated with 3 cysteines and an exchangeable S-adenosyl-L-methionine.</text>
</comment>
<comment type="cofactor">
    <cofactor evidence="1">
        <name>[2Fe-2S] cluster</name>
        <dbReference type="ChEBI" id="CHEBI:190135"/>
    </cofactor>
    <text evidence="1">Binds 1 [2Fe-2S] cluster. The cluster is coordinated with 3 cysteines and 1 arginine.</text>
</comment>
<comment type="pathway">
    <text evidence="1">Cofactor biosynthesis; biotin biosynthesis; biotin from 7,8-diaminononanoate: step 2/2.</text>
</comment>
<comment type="subunit">
    <text evidence="1">Homodimer.</text>
</comment>
<comment type="similarity">
    <text evidence="1">Belongs to the radical SAM superfamily. Biotin synthase family.</text>
</comment>
<sequence>MVQVSTHSATQSIPMEGEALKNWLQTRANQIIAGDRLSKQEALALTAIEGQENIFSLCEAADRIRQACCGNTVDLCSIINIKSGSCSENCSFCSQSVHHPGQDSPIYGLKSREEIVTHAKAAADAGAKRFCLVSQGRGLKYNSPKSQEFEEILATVQEIIETAKIKPCCALGELTLPQAQALKEAGVTRYNHNLEASENFYPNVVSTHSWQDRVETVKNLKAAGIQACTGGIIGMGESWTDRIDLAFSLAELEVESVPINLLNPRSGTPLGHLPKLEPFTALKAIAIFRFILPQQILRYAGGREAVMGELQNLGLKSGINAMLIGHYLTTLGQPPQQDQAMLADLSLIGGEAPIPGEYQPQQAT</sequence>
<feature type="chain" id="PRO_0000381474" description="Biotin synthase">
    <location>
        <begin position="1"/>
        <end position="364"/>
    </location>
</feature>
<feature type="domain" description="Radical SAM core" evidence="2">
    <location>
        <begin position="68"/>
        <end position="303"/>
    </location>
</feature>
<feature type="binding site" evidence="1">
    <location>
        <position position="86"/>
    </location>
    <ligand>
        <name>[4Fe-4S] cluster</name>
        <dbReference type="ChEBI" id="CHEBI:49883"/>
        <note>4Fe-4S-S-AdoMet</note>
    </ligand>
</feature>
<feature type="binding site" evidence="1">
    <location>
        <position position="90"/>
    </location>
    <ligand>
        <name>[4Fe-4S] cluster</name>
        <dbReference type="ChEBI" id="CHEBI:49883"/>
        <note>4Fe-4S-S-AdoMet</note>
    </ligand>
</feature>
<feature type="binding site" evidence="1">
    <location>
        <position position="93"/>
    </location>
    <ligand>
        <name>[4Fe-4S] cluster</name>
        <dbReference type="ChEBI" id="CHEBI:49883"/>
        <note>4Fe-4S-S-AdoMet</note>
    </ligand>
</feature>
<feature type="binding site" evidence="1">
    <location>
        <position position="131"/>
    </location>
    <ligand>
        <name>[2Fe-2S] cluster</name>
        <dbReference type="ChEBI" id="CHEBI:190135"/>
    </ligand>
</feature>
<feature type="binding site" evidence="1">
    <location>
        <position position="168"/>
    </location>
    <ligand>
        <name>[2Fe-2S] cluster</name>
        <dbReference type="ChEBI" id="CHEBI:190135"/>
    </ligand>
</feature>
<feature type="binding site" evidence="1">
    <location>
        <position position="228"/>
    </location>
    <ligand>
        <name>[2Fe-2S] cluster</name>
        <dbReference type="ChEBI" id="CHEBI:190135"/>
    </ligand>
</feature>
<feature type="binding site" evidence="1">
    <location>
        <position position="298"/>
    </location>
    <ligand>
        <name>[2Fe-2S] cluster</name>
        <dbReference type="ChEBI" id="CHEBI:190135"/>
    </ligand>
</feature>
<gene>
    <name evidence="1" type="primary">bioB</name>
    <name type="ordered locus">MAE_00170</name>
</gene>
<organism>
    <name type="scientific">Microcystis aeruginosa (strain NIES-843 / IAM M-2473)</name>
    <dbReference type="NCBI Taxonomy" id="449447"/>
    <lineage>
        <taxon>Bacteria</taxon>
        <taxon>Bacillati</taxon>
        <taxon>Cyanobacteriota</taxon>
        <taxon>Cyanophyceae</taxon>
        <taxon>Oscillatoriophycideae</taxon>
        <taxon>Chroococcales</taxon>
        <taxon>Microcystaceae</taxon>
        <taxon>Microcystis</taxon>
    </lineage>
</organism>
<name>BIOB_MICAN</name>
<accession>B0JFP4</accession>
<keyword id="KW-0001">2Fe-2S</keyword>
<keyword id="KW-0004">4Fe-4S</keyword>
<keyword id="KW-0093">Biotin biosynthesis</keyword>
<keyword id="KW-0408">Iron</keyword>
<keyword id="KW-0411">Iron-sulfur</keyword>
<keyword id="KW-0479">Metal-binding</keyword>
<keyword id="KW-0949">S-adenosyl-L-methionine</keyword>
<keyword id="KW-0808">Transferase</keyword>
<evidence type="ECO:0000255" key="1">
    <source>
        <dbReference type="HAMAP-Rule" id="MF_01694"/>
    </source>
</evidence>
<evidence type="ECO:0000255" key="2">
    <source>
        <dbReference type="PROSITE-ProRule" id="PRU01266"/>
    </source>
</evidence>
<dbReference type="EC" id="2.8.1.6" evidence="1"/>
<dbReference type="EMBL" id="AP009552">
    <property type="protein sequence ID" value="BAF99838.1"/>
    <property type="molecule type" value="Genomic_DNA"/>
</dbReference>
<dbReference type="RefSeq" id="WP_012263790.1">
    <property type="nucleotide sequence ID" value="NC_010296.1"/>
</dbReference>
<dbReference type="SMR" id="B0JFP4"/>
<dbReference type="STRING" id="449447.MAE_00170"/>
<dbReference type="PaxDb" id="449447-MAE_00170"/>
<dbReference type="EnsemblBacteria" id="BAF99838">
    <property type="protein sequence ID" value="BAF99838"/>
    <property type="gene ID" value="MAE_00170"/>
</dbReference>
<dbReference type="KEGG" id="mar:MAE_00170"/>
<dbReference type="PATRIC" id="fig|449447.4.peg.16"/>
<dbReference type="eggNOG" id="COG0502">
    <property type="taxonomic scope" value="Bacteria"/>
</dbReference>
<dbReference type="HOGENOM" id="CLU_033172_2_1_3"/>
<dbReference type="BioCyc" id="MAER449447:MAE_RS00080-MONOMER"/>
<dbReference type="UniPathway" id="UPA00078">
    <property type="reaction ID" value="UER00162"/>
</dbReference>
<dbReference type="Proteomes" id="UP000001510">
    <property type="component" value="Chromosome"/>
</dbReference>
<dbReference type="GO" id="GO:0051537">
    <property type="term" value="F:2 iron, 2 sulfur cluster binding"/>
    <property type="evidence" value="ECO:0007669"/>
    <property type="project" value="UniProtKB-KW"/>
</dbReference>
<dbReference type="GO" id="GO:0051539">
    <property type="term" value="F:4 iron, 4 sulfur cluster binding"/>
    <property type="evidence" value="ECO:0007669"/>
    <property type="project" value="UniProtKB-KW"/>
</dbReference>
<dbReference type="GO" id="GO:0004076">
    <property type="term" value="F:biotin synthase activity"/>
    <property type="evidence" value="ECO:0007669"/>
    <property type="project" value="UniProtKB-UniRule"/>
</dbReference>
<dbReference type="GO" id="GO:0005506">
    <property type="term" value="F:iron ion binding"/>
    <property type="evidence" value="ECO:0007669"/>
    <property type="project" value="UniProtKB-UniRule"/>
</dbReference>
<dbReference type="GO" id="GO:0009102">
    <property type="term" value="P:biotin biosynthetic process"/>
    <property type="evidence" value="ECO:0007669"/>
    <property type="project" value="UniProtKB-UniRule"/>
</dbReference>
<dbReference type="CDD" id="cd01335">
    <property type="entry name" value="Radical_SAM"/>
    <property type="match status" value="1"/>
</dbReference>
<dbReference type="FunFam" id="3.20.20.70:FF:000026">
    <property type="entry name" value="Biotin synthase"/>
    <property type="match status" value="1"/>
</dbReference>
<dbReference type="Gene3D" id="3.20.20.70">
    <property type="entry name" value="Aldolase class I"/>
    <property type="match status" value="1"/>
</dbReference>
<dbReference type="HAMAP" id="MF_01694">
    <property type="entry name" value="BioB"/>
    <property type="match status" value="1"/>
</dbReference>
<dbReference type="InterPro" id="IPR013785">
    <property type="entry name" value="Aldolase_TIM"/>
</dbReference>
<dbReference type="InterPro" id="IPR010722">
    <property type="entry name" value="BATS_dom"/>
</dbReference>
<dbReference type="InterPro" id="IPR002684">
    <property type="entry name" value="Biotin_synth/BioAB"/>
</dbReference>
<dbReference type="InterPro" id="IPR024177">
    <property type="entry name" value="Biotin_synthase"/>
</dbReference>
<dbReference type="InterPro" id="IPR006638">
    <property type="entry name" value="Elp3/MiaA/NifB-like_rSAM"/>
</dbReference>
<dbReference type="InterPro" id="IPR007197">
    <property type="entry name" value="rSAM"/>
</dbReference>
<dbReference type="NCBIfam" id="TIGR00433">
    <property type="entry name" value="bioB"/>
    <property type="match status" value="1"/>
</dbReference>
<dbReference type="PANTHER" id="PTHR22976">
    <property type="entry name" value="BIOTIN SYNTHASE"/>
    <property type="match status" value="1"/>
</dbReference>
<dbReference type="PANTHER" id="PTHR22976:SF2">
    <property type="entry name" value="BIOTIN SYNTHASE, MITOCHONDRIAL"/>
    <property type="match status" value="1"/>
</dbReference>
<dbReference type="Pfam" id="PF06968">
    <property type="entry name" value="BATS"/>
    <property type="match status" value="1"/>
</dbReference>
<dbReference type="Pfam" id="PF04055">
    <property type="entry name" value="Radical_SAM"/>
    <property type="match status" value="1"/>
</dbReference>
<dbReference type="PIRSF" id="PIRSF001619">
    <property type="entry name" value="Biotin_synth"/>
    <property type="match status" value="1"/>
</dbReference>
<dbReference type="SFLD" id="SFLDG01278">
    <property type="entry name" value="biotin_synthase_like"/>
    <property type="match status" value="1"/>
</dbReference>
<dbReference type="SFLD" id="SFLDS00029">
    <property type="entry name" value="Radical_SAM"/>
    <property type="match status" value="1"/>
</dbReference>
<dbReference type="SMART" id="SM00876">
    <property type="entry name" value="BATS"/>
    <property type="match status" value="1"/>
</dbReference>
<dbReference type="SMART" id="SM00729">
    <property type="entry name" value="Elp3"/>
    <property type="match status" value="1"/>
</dbReference>
<dbReference type="SUPFAM" id="SSF102114">
    <property type="entry name" value="Radical SAM enzymes"/>
    <property type="match status" value="1"/>
</dbReference>
<dbReference type="PROSITE" id="PS51918">
    <property type="entry name" value="RADICAL_SAM"/>
    <property type="match status" value="1"/>
</dbReference>
<reference key="1">
    <citation type="journal article" date="2007" name="DNA Res.">
        <title>Complete genomic structure of the bloom-forming toxic cyanobacterium Microcystis aeruginosa NIES-843.</title>
        <authorList>
            <person name="Kaneko T."/>
            <person name="Nakajima N."/>
            <person name="Okamoto S."/>
            <person name="Suzuki I."/>
            <person name="Tanabe Y."/>
            <person name="Tamaoki M."/>
            <person name="Nakamura Y."/>
            <person name="Kasai F."/>
            <person name="Watanabe A."/>
            <person name="Kawashima K."/>
            <person name="Kishida Y."/>
            <person name="Ono A."/>
            <person name="Shimizu Y."/>
            <person name="Takahashi C."/>
            <person name="Minami C."/>
            <person name="Fujishiro T."/>
            <person name="Kohara M."/>
            <person name="Katoh M."/>
            <person name="Nakazaki N."/>
            <person name="Nakayama S."/>
            <person name="Yamada M."/>
            <person name="Tabata S."/>
            <person name="Watanabe M.M."/>
        </authorList>
    </citation>
    <scope>NUCLEOTIDE SEQUENCE [LARGE SCALE GENOMIC DNA]</scope>
    <source>
        <strain>NIES-843 / IAM M-247</strain>
    </source>
</reference>
<proteinExistence type="inferred from homology"/>
<protein>
    <recommendedName>
        <fullName evidence="1">Biotin synthase</fullName>
        <ecNumber evidence="1">2.8.1.6</ecNumber>
    </recommendedName>
</protein>